<comment type="similarity">
    <text evidence="1">Belongs to the UPF0284 family.</text>
</comment>
<evidence type="ECO:0000255" key="1">
    <source>
        <dbReference type="HAMAP-Rule" id="MF_01086"/>
    </source>
</evidence>
<feature type="chain" id="PRO_0000151046" description="UPF0284 protein sll1500">
    <location>
        <begin position="1"/>
        <end position="369"/>
    </location>
</feature>
<sequence>MLTVYTQSDQALSWIERHGHCPPVFVCVLGFTETGLIPGISAAGKTPADRKLTAIADAEFLIKGTTAGATYPLPPLISGVSPVFITKALVDALHTPVYLFNSGLPIPPAVPVINLDGQPARCLSTGQALPLALVEHLFQQGLQWGAQLAQEHAESYLVLSECVVGGTTTALGVLLGLGIDAGGKVNSSHPHCNHQQKLALVRQSLEHHSPHLNAMEVVAAVGDPMQMVVAGMAIAASHSTGVMLAGGTQMLAVYALIQALTRQQNLAVDFSRLVVGTTKWVCEDASGDTVGLANLLAPVSLLAPQLSFSSSVYPQLQVYEQGFVKEGVGAGAMAIAAHLYKNWGQEQLLELIENLITRELGQVKEKKQQ</sequence>
<reference key="1">
    <citation type="journal article" date="1996" name="DNA Res.">
        <title>Sequence analysis of the genome of the unicellular cyanobacterium Synechocystis sp. strain PCC6803. II. Sequence determination of the entire genome and assignment of potential protein-coding regions.</title>
        <authorList>
            <person name="Kaneko T."/>
            <person name="Sato S."/>
            <person name="Kotani H."/>
            <person name="Tanaka A."/>
            <person name="Asamizu E."/>
            <person name="Nakamura Y."/>
            <person name="Miyajima N."/>
            <person name="Hirosawa M."/>
            <person name="Sugiura M."/>
            <person name="Sasamoto S."/>
            <person name="Kimura T."/>
            <person name="Hosouchi T."/>
            <person name="Matsuno A."/>
            <person name="Muraki A."/>
            <person name="Nakazaki N."/>
            <person name="Naruo K."/>
            <person name="Okumura S."/>
            <person name="Shimpo S."/>
            <person name="Takeuchi C."/>
            <person name="Wada T."/>
            <person name="Watanabe A."/>
            <person name="Yamada M."/>
            <person name="Yasuda M."/>
            <person name="Tabata S."/>
        </authorList>
    </citation>
    <scope>NUCLEOTIDE SEQUENCE [LARGE SCALE GENOMIC DNA]</scope>
    <source>
        <strain>ATCC 27184 / PCC 6803 / Kazusa</strain>
    </source>
</reference>
<accession>P73003</accession>
<protein>
    <recommendedName>
        <fullName evidence="1">UPF0284 protein sll1500</fullName>
    </recommendedName>
</protein>
<dbReference type="EMBL" id="BA000022">
    <property type="protein sequence ID" value="BAA17023.1"/>
    <property type="molecule type" value="Genomic_DNA"/>
</dbReference>
<dbReference type="PIR" id="S74983">
    <property type="entry name" value="S74983"/>
</dbReference>
<dbReference type="SMR" id="P73003"/>
<dbReference type="IntAct" id="P73003">
    <property type="interactions" value="6"/>
</dbReference>
<dbReference type="STRING" id="1148.gene:10497884"/>
<dbReference type="PaxDb" id="1148-1652098"/>
<dbReference type="EnsemblBacteria" id="BAA17023">
    <property type="protein sequence ID" value="BAA17023"/>
    <property type="gene ID" value="BAA17023"/>
</dbReference>
<dbReference type="KEGG" id="syn:sll1500"/>
<dbReference type="eggNOG" id="COG2038">
    <property type="taxonomic scope" value="Bacteria"/>
</dbReference>
<dbReference type="InParanoid" id="P73003"/>
<dbReference type="PhylomeDB" id="P73003"/>
<dbReference type="Proteomes" id="UP000001425">
    <property type="component" value="Chromosome"/>
</dbReference>
<dbReference type="GO" id="GO:0008939">
    <property type="term" value="F:nicotinate-nucleotide-dimethylbenzimidazole phosphoribosyltransferase activity"/>
    <property type="evidence" value="ECO:0007669"/>
    <property type="project" value="InterPro"/>
</dbReference>
<dbReference type="CDD" id="cd02439">
    <property type="entry name" value="DMB-PRT_CobT"/>
    <property type="match status" value="1"/>
</dbReference>
<dbReference type="Gene3D" id="3.40.50.10210">
    <property type="match status" value="1"/>
</dbReference>
<dbReference type="HAMAP" id="MF_01086">
    <property type="entry name" value="UPF0284"/>
    <property type="match status" value="1"/>
</dbReference>
<dbReference type="InterPro" id="IPR003200">
    <property type="entry name" value="Nict_dMeBzImd_PRibTrfase"/>
</dbReference>
<dbReference type="InterPro" id="IPR002805">
    <property type="entry name" value="Nict_dMeBzImd_PRibTrfase_arc"/>
</dbReference>
<dbReference type="InterPro" id="IPR036087">
    <property type="entry name" value="Nict_dMeBzImd_PRibTrfase_sf"/>
</dbReference>
<dbReference type="NCBIfam" id="TIGR00303">
    <property type="entry name" value="nicotinate mononucleotide-dependent phosphoribosyltransferase CobT"/>
    <property type="match status" value="1"/>
</dbReference>
<dbReference type="NCBIfam" id="NF003373">
    <property type="entry name" value="PRK04447.1-6"/>
    <property type="match status" value="1"/>
</dbReference>
<dbReference type="PANTHER" id="PTHR38811">
    <property type="match status" value="1"/>
</dbReference>
<dbReference type="PANTHER" id="PTHR38811:SF1">
    <property type="entry name" value="UPF0284 PROTEIN SLL1500"/>
    <property type="match status" value="1"/>
</dbReference>
<dbReference type="SUPFAM" id="SSF52733">
    <property type="entry name" value="Nicotinate mononucleotide:5,6-dimethylbenzimidazole phosphoribosyltransferase (CobT)"/>
    <property type="match status" value="1"/>
</dbReference>
<proteinExistence type="inferred from homology"/>
<gene>
    <name type="ordered locus">sll1500</name>
</gene>
<keyword id="KW-1185">Reference proteome</keyword>
<organism>
    <name type="scientific">Synechocystis sp. (strain ATCC 27184 / PCC 6803 / Kazusa)</name>
    <dbReference type="NCBI Taxonomy" id="1111708"/>
    <lineage>
        <taxon>Bacteria</taxon>
        <taxon>Bacillati</taxon>
        <taxon>Cyanobacteriota</taxon>
        <taxon>Cyanophyceae</taxon>
        <taxon>Synechococcales</taxon>
        <taxon>Merismopediaceae</taxon>
        <taxon>Synechocystis</taxon>
    </lineage>
</organism>
<name>Y1500_SYNY3</name>